<protein>
    <recommendedName>
        <fullName>Lipopolysaccharide export system ATP-binding protein LptB</fullName>
        <ecNumber>7.5.2.-</ecNumber>
    </recommendedName>
</protein>
<organism>
    <name type="scientific">Shigella flexneri</name>
    <dbReference type="NCBI Taxonomy" id="623"/>
    <lineage>
        <taxon>Bacteria</taxon>
        <taxon>Pseudomonadati</taxon>
        <taxon>Pseudomonadota</taxon>
        <taxon>Gammaproteobacteria</taxon>
        <taxon>Enterobacterales</taxon>
        <taxon>Enterobacteriaceae</taxon>
        <taxon>Shigella</taxon>
    </lineage>
</organism>
<accession>P0A9V4</accession>
<accession>P31220</accession>
<sequence>MATLTAKNLAKAYKGRRVVEDVSLTVNSGEIVGLLGPNGAGKTTTFYMVVGIVPRDAGNIIIDDDDISLLPLHARARRGIGYLPQEASIFRRLSVYDNLMAVLQIRDDLSAEQREDRANELMEEFHIEHLRDSMGQSLSGGERRRVEIARALAANPKFILLDEPFAGVDPISVIDIKRIIEHLRDSGLGVLITDHNVRETLAVCERAYIVSQGHLIAHGTPTEILQDEHVKRVYLGEDFRL</sequence>
<comment type="function">
    <text evidence="1">Part of the ABC transporter complex LptBFG involved in the translocation of lipopolysaccharide (LPS) from the inner membrane to the outer membrane. Probably responsible for energy coupling to the transport system (By similarity).</text>
</comment>
<comment type="subunit">
    <text evidence="1">Component of the lipopolysaccharide transport and assembly complex. The LptBFG transporter is composed of two ATP-binding proteins (LptB) and two transmembrane proteins (LptF and LptG) (By similarity).</text>
</comment>
<comment type="subcellular location">
    <subcellularLocation>
        <location>Cytoplasm</location>
    </subcellularLocation>
    <subcellularLocation>
        <location evidence="1">Cell inner membrane</location>
        <topology evidence="1">Peripheral membrane protein</topology>
        <orientation evidence="1">Cytoplasmic side</orientation>
    </subcellularLocation>
</comment>
<comment type="similarity">
    <text evidence="3">Belongs to the ABC transporter superfamily. Outer membrane lipopolysaccharide export (TC 1.B.42) family.</text>
</comment>
<name>LPTB_SHIFL</name>
<feature type="initiator methionine" description="Removed" evidence="1">
    <location>
        <position position="1"/>
    </location>
</feature>
<feature type="chain" id="PRO_0000093181" description="Lipopolysaccharide export system ATP-binding protein LptB">
    <location>
        <begin position="2"/>
        <end position="241"/>
    </location>
</feature>
<feature type="domain" description="ABC transporter" evidence="2">
    <location>
        <begin position="4"/>
        <end position="237"/>
    </location>
</feature>
<feature type="binding site" evidence="2">
    <location>
        <begin position="36"/>
        <end position="43"/>
    </location>
    <ligand>
        <name>ATP</name>
        <dbReference type="ChEBI" id="CHEBI:30616"/>
    </ligand>
</feature>
<feature type="strand" evidence="5">
    <location>
        <begin position="3"/>
        <end position="5"/>
    </location>
</feature>
<feature type="strand" evidence="5">
    <location>
        <begin position="8"/>
        <end position="22"/>
    </location>
</feature>
<feature type="strand" evidence="5">
    <location>
        <begin position="25"/>
        <end position="29"/>
    </location>
</feature>
<feature type="strand" evidence="5">
    <location>
        <begin position="31"/>
        <end position="33"/>
    </location>
</feature>
<feature type="strand" evidence="4">
    <location>
        <begin position="38"/>
        <end position="40"/>
    </location>
</feature>
<feature type="helix" evidence="5">
    <location>
        <begin position="44"/>
        <end position="50"/>
    </location>
</feature>
<feature type="strand" evidence="5">
    <location>
        <begin position="51"/>
        <end position="53"/>
    </location>
</feature>
<feature type="strand" evidence="4">
    <location>
        <begin position="59"/>
        <end position="62"/>
    </location>
</feature>
<feature type="helix" evidence="5">
    <location>
        <begin position="72"/>
        <end position="75"/>
    </location>
</feature>
<feature type="turn" evidence="5">
    <location>
        <begin position="76"/>
        <end position="79"/>
    </location>
</feature>
<feature type="strand" evidence="5">
    <location>
        <begin position="80"/>
        <end position="83"/>
    </location>
</feature>
<feature type="strand" evidence="4">
    <location>
        <begin position="91"/>
        <end position="93"/>
    </location>
</feature>
<feature type="helix" evidence="5">
    <location>
        <begin position="95"/>
        <end position="103"/>
    </location>
</feature>
<feature type="turn" evidence="5">
    <location>
        <begin position="111"/>
        <end position="113"/>
    </location>
</feature>
<feature type="turn" evidence="5">
    <location>
        <begin position="115"/>
        <end position="117"/>
    </location>
</feature>
<feature type="helix" evidence="5">
    <location>
        <begin position="118"/>
        <end position="124"/>
    </location>
</feature>
<feature type="helix" evidence="4">
    <location>
        <begin position="128"/>
        <end position="130"/>
    </location>
</feature>
<feature type="strand" evidence="5">
    <location>
        <begin position="140"/>
        <end position="142"/>
    </location>
</feature>
<feature type="turn" evidence="5">
    <location>
        <begin position="143"/>
        <end position="145"/>
    </location>
</feature>
<feature type="helix" evidence="5">
    <location>
        <begin position="146"/>
        <end position="152"/>
    </location>
</feature>
<feature type="strand" evidence="5">
    <location>
        <begin position="157"/>
        <end position="167"/>
    </location>
</feature>
<feature type="helix" evidence="5">
    <location>
        <begin position="173"/>
        <end position="185"/>
    </location>
</feature>
<feature type="strand" evidence="5">
    <location>
        <begin position="190"/>
        <end position="192"/>
    </location>
</feature>
<feature type="turn" evidence="5">
    <location>
        <begin position="200"/>
        <end position="202"/>
    </location>
</feature>
<feature type="strand" evidence="5">
    <location>
        <begin position="205"/>
        <end position="207"/>
    </location>
</feature>
<feature type="strand" evidence="5">
    <location>
        <begin position="209"/>
        <end position="211"/>
    </location>
</feature>
<feature type="strand" evidence="5">
    <location>
        <begin position="214"/>
        <end position="217"/>
    </location>
</feature>
<feature type="helix" evidence="5">
    <location>
        <begin position="221"/>
        <end position="224"/>
    </location>
</feature>
<feature type="helix" evidence="5">
    <location>
        <begin position="230"/>
        <end position="233"/>
    </location>
</feature>
<reference key="1">
    <citation type="journal article" date="2002" name="Nucleic Acids Res.">
        <title>Genome sequence of Shigella flexneri 2a: insights into pathogenicity through comparison with genomes of Escherichia coli K12 and O157.</title>
        <authorList>
            <person name="Jin Q."/>
            <person name="Yuan Z."/>
            <person name="Xu J."/>
            <person name="Wang Y."/>
            <person name="Shen Y."/>
            <person name="Lu W."/>
            <person name="Wang J."/>
            <person name="Liu H."/>
            <person name="Yang J."/>
            <person name="Yang F."/>
            <person name="Zhang X."/>
            <person name="Zhang J."/>
            <person name="Yang G."/>
            <person name="Wu H."/>
            <person name="Qu D."/>
            <person name="Dong J."/>
            <person name="Sun L."/>
            <person name="Xue Y."/>
            <person name="Zhao A."/>
            <person name="Gao Y."/>
            <person name="Zhu J."/>
            <person name="Kan B."/>
            <person name="Ding K."/>
            <person name="Chen S."/>
            <person name="Cheng H."/>
            <person name="Yao Z."/>
            <person name="He B."/>
            <person name="Chen R."/>
            <person name="Ma D."/>
            <person name="Qiang B."/>
            <person name="Wen Y."/>
            <person name="Hou Y."/>
            <person name="Yu J."/>
        </authorList>
    </citation>
    <scope>NUCLEOTIDE SEQUENCE [LARGE SCALE GENOMIC DNA]</scope>
    <source>
        <strain>301 / Serotype 2a</strain>
    </source>
</reference>
<reference key="2">
    <citation type="journal article" date="2003" name="Infect. Immun.">
        <title>Complete genome sequence and comparative genomics of Shigella flexneri serotype 2a strain 2457T.</title>
        <authorList>
            <person name="Wei J."/>
            <person name="Goldberg M.B."/>
            <person name="Burland V."/>
            <person name="Venkatesan M.M."/>
            <person name="Deng W."/>
            <person name="Fournier G."/>
            <person name="Mayhew G.F."/>
            <person name="Plunkett G. III"/>
            <person name="Rose D.J."/>
            <person name="Darling A."/>
            <person name="Mau B."/>
            <person name="Perna N.T."/>
            <person name="Payne S.M."/>
            <person name="Runyen-Janecky L.J."/>
            <person name="Zhou S."/>
            <person name="Schwartz D.C."/>
            <person name="Blattner F.R."/>
        </authorList>
    </citation>
    <scope>NUCLEOTIDE SEQUENCE [LARGE SCALE GENOMIC DNA]</scope>
    <source>
        <strain>ATCC 700930 / 2457T / Serotype 2a</strain>
    </source>
</reference>
<keyword id="KW-0002">3D-structure</keyword>
<keyword id="KW-0067">ATP-binding</keyword>
<keyword id="KW-0997">Cell inner membrane</keyword>
<keyword id="KW-1003">Cell membrane</keyword>
<keyword id="KW-0963">Cytoplasm</keyword>
<keyword id="KW-0472">Membrane</keyword>
<keyword id="KW-0547">Nucleotide-binding</keyword>
<keyword id="KW-1185">Reference proteome</keyword>
<keyword id="KW-1278">Translocase</keyword>
<keyword id="KW-0813">Transport</keyword>
<proteinExistence type="evidence at protein level"/>
<evidence type="ECO:0000250" key="1"/>
<evidence type="ECO:0000255" key="2">
    <source>
        <dbReference type="PROSITE-ProRule" id="PRU00434"/>
    </source>
</evidence>
<evidence type="ECO:0000305" key="3"/>
<evidence type="ECO:0007829" key="4">
    <source>
        <dbReference type="PDB" id="6S8G"/>
    </source>
</evidence>
<evidence type="ECO:0007829" key="5">
    <source>
        <dbReference type="PDB" id="6S8N"/>
    </source>
</evidence>
<gene>
    <name type="primary">lptB</name>
    <name type="ordered locus">SF3241</name>
    <name type="ordered locus">S3459</name>
</gene>
<dbReference type="EC" id="7.5.2.-"/>
<dbReference type="EMBL" id="AE005674">
    <property type="protein sequence ID" value="AAN44707.1"/>
    <property type="molecule type" value="Genomic_DNA"/>
</dbReference>
<dbReference type="EMBL" id="AE014073">
    <property type="protein sequence ID" value="AAP18521.1"/>
    <property type="molecule type" value="Genomic_DNA"/>
</dbReference>
<dbReference type="RefSeq" id="WP_000224099.1">
    <property type="nucleotide sequence ID" value="NZ_WPGW01000004.1"/>
</dbReference>
<dbReference type="PDB" id="6S8G">
    <property type="method" value="EM"/>
    <property type="resolution" value="3.50 A"/>
    <property type="chains" value="A/B=1-241"/>
</dbReference>
<dbReference type="PDB" id="6S8H">
    <property type="method" value="EM"/>
    <property type="resolution" value="3.70 A"/>
    <property type="chains" value="A/B=1-241"/>
</dbReference>
<dbReference type="PDB" id="6S8N">
    <property type="method" value="EM"/>
    <property type="resolution" value="3.10 A"/>
    <property type="chains" value="A/B=1-241"/>
</dbReference>
<dbReference type="PDBsum" id="6S8G"/>
<dbReference type="PDBsum" id="6S8H"/>
<dbReference type="PDBsum" id="6S8N"/>
<dbReference type="SMR" id="P0A9V4"/>
<dbReference type="STRING" id="198214.SF3241"/>
<dbReference type="PaxDb" id="198214-SF3241"/>
<dbReference type="GeneID" id="93778780"/>
<dbReference type="KEGG" id="sfl:SF3241"/>
<dbReference type="KEGG" id="sfx:S3459"/>
<dbReference type="PATRIC" id="fig|198214.7.peg.3842"/>
<dbReference type="HOGENOM" id="CLU_000604_1_2_6"/>
<dbReference type="Proteomes" id="UP000001006">
    <property type="component" value="Chromosome"/>
</dbReference>
<dbReference type="Proteomes" id="UP000002673">
    <property type="component" value="Chromosome"/>
</dbReference>
<dbReference type="GO" id="GO:0043190">
    <property type="term" value="C:ATP-binding cassette (ABC) transporter complex"/>
    <property type="evidence" value="ECO:0007669"/>
    <property type="project" value="InterPro"/>
</dbReference>
<dbReference type="GO" id="GO:0005737">
    <property type="term" value="C:cytoplasm"/>
    <property type="evidence" value="ECO:0007669"/>
    <property type="project" value="UniProtKB-SubCell"/>
</dbReference>
<dbReference type="GO" id="GO:0005524">
    <property type="term" value="F:ATP binding"/>
    <property type="evidence" value="ECO:0007669"/>
    <property type="project" value="UniProtKB-KW"/>
</dbReference>
<dbReference type="GO" id="GO:0016887">
    <property type="term" value="F:ATP hydrolysis activity"/>
    <property type="evidence" value="ECO:0007669"/>
    <property type="project" value="InterPro"/>
</dbReference>
<dbReference type="GO" id="GO:0055085">
    <property type="term" value="P:transmembrane transport"/>
    <property type="evidence" value="ECO:0007669"/>
    <property type="project" value="InterPro"/>
</dbReference>
<dbReference type="CDD" id="cd03218">
    <property type="entry name" value="ABC_YhbG"/>
    <property type="match status" value="1"/>
</dbReference>
<dbReference type="FunFam" id="3.40.50.300:FF:000151">
    <property type="entry name" value="Lipopolysaccharide ABC transporter ATP-binding protein"/>
    <property type="match status" value="1"/>
</dbReference>
<dbReference type="Gene3D" id="3.40.50.300">
    <property type="entry name" value="P-loop containing nucleotide triphosphate hydrolases"/>
    <property type="match status" value="1"/>
</dbReference>
<dbReference type="InterPro" id="IPR003593">
    <property type="entry name" value="AAA+_ATPase"/>
</dbReference>
<dbReference type="InterPro" id="IPR051120">
    <property type="entry name" value="ABC_AA/LPS_Transport"/>
</dbReference>
<dbReference type="InterPro" id="IPR003439">
    <property type="entry name" value="ABC_transporter-like_ATP-bd"/>
</dbReference>
<dbReference type="InterPro" id="IPR017871">
    <property type="entry name" value="ABC_transporter-like_CS"/>
</dbReference>
<dbReference type="InterPro" id="IPR032823">
    <property type="entry name" value="BCA_ABC_TP_C"/>
</dbReference>
<dbReference type="InterPro" id="IPR030921">
    <property type="entry name" value="LPS_export_LptB"/>
</dbReference>
<dbReference type="InterPro" id="IPR027417">
    <property type="entry name" value="P-loop_NTPase"/>
</dbReference>
<dbReference type="NCBIfam" id="TIGR04406">
    <property type="entry name" value="LPS_export_lptB"/>
    <property type="match status" value="1"/>
</dbReference>
<dbReference type="NCBIfam" id="NF008144">
    <property type="entry name" value="PRK10895.1"/>
    <property type="match status" value="1"/>
</dbReference>
<dbReference type="PANTHER" id="PTHR45772">
    <property type="entry name" value="CONSERVED COMPONENT OF ABC TRANSPORTER FOR NATURAL AMINO ACIDS-RELATED"/>
    <property type="match status" value="1"/>
</dbReference>
<dbReference type="PANTHER" id="PTHR45772:SF10">
    <property type="entry name" value="LIPOPOLYSACCHARIDE EXPORT SYSTEM ATP-BINDING PROTEIN LPTB"/>
    <property type="match status" value="1"/>
</dbReference>
<dbReference type="Pfam" id="PF00005">
    <property type="entry name" value="ABC_tran"/>
    <property type="match status" value="1"/>
</dbReference>
<dbReference type="Pfam" id="PF12399">
    <property type="entry name" value="BCA_ABC_TP_C"/>
    <property type="match status" value="1"/>
</dbReference>
<dbReference type="SMART" id="SM00382">
    <property type="entry name" value="AAA"/>
    <property type="match status" value="1"/>
</dbReference>
<dbReference type="SUPFAM" id="SSF52540">
    <property type="entry name" value="P-loop containing nucleoside triphosphate hydrolases"/>
    <property type="match status" value="1"/>
</dbReference>
<dbReference type="PROSITE" id="PS00211">
    <property type="entry name" value="ABC_TRANSPORTER_1"/>
    <property type="match status" value="1"/>
</dbReference>
<dbReference type="PROSITE" id="PS50893">
    <property type="entry name" value="ABC_TRANSPORTER_2"/>
    <property type="match status" value="1"/>
</dbReference>